<reference key="1">
    <citation type="journal article" date="2006" name="PLoS Genet.">
        <title>Comparative genomics of emerging human ehrlichiosis agents.</title>
        <authorList>
            <person name="Dunning Hotopp J.C."/>
            <person name="Lin M."/>
            <person name="Madupu R."/>
            <person name="Crabtree J."/>
            <person name="Angiuoli S.V."/>
            <person name="Eisen J.A."/>
            <person name="Seshadri R."/>
            <person name="Ren Q."/>
            <person name="Wu M."/>
            <person name="Utterback T.R."/>
            <person name="Smith S."/>
            <person name="Lewis M."/>
            <person name="Khouri H."/>
            <person name="Zhang C."/>
            <person name="Niu H."/>
            <person name="Lin Q."/>
            <person name="Ohashi N."/>
            <person name="Zhi N."/>
            <person name="Nelson W.C."/>
            <person name="Brinkac L.M."/>
            <person name="Dodson R.J."/>
            <person name="Rosovitz M.J."/>
            <person name="Sundaram J.P."/>
            <person name="Daugherty S.C."/>
            <person name="Davidsen T."/>
            <person name="Durkin A.S."/>
            <person name="Gwinn M.L."/>
            <person name="Haft D.H."/>
            <person name="Selengut J.D."/>
            <person name="Sullivan S.A."/>
            <person name="Zafar N."/>
            <person name="Zhou L."/>
            <person name="Benahmed F."/>
            <person name="Forberger H."/>
            <person name="Halpin R."/>
            <person name="Mulligan S."/>
            <person name="Robinson J."/>
            <person name="White O."/>
            <person name="Rikihisa Y."/>
            <person name="Tettelin H."/>
        </authorList>
    </citation>
    <scope>NUCLEOTIDE SEQUENCE [LARGE SCALE GENOMIC DNA]</scope>
    <source>
        <strain>HZ</strain>
    </source>
</reference>
<sequence>MEPYSEDSILALTEKVFKISGYRFQDHELLKTAVTHPSIAAERYASYERLEFLGDAVLGLVVSEMLYTLFPDDSEGLLTKKRIALVRGSKVVEIAQSLNLGNILLMSKGELTSGGISNNSNLENALEALIGAIYVDGGLESVRHFILQHWKPLATNLADTPLQDAKTALQEWAQGHNFAIPSYRLINKSGLEHAPVFTVEVTVNGQRVHATGCKKKYAEIAAAKLMLEKVTKQNDP</sequence>
<feature type="chain" id="PRO_1000075719" description="Ribonuclease 3">
    <location>
        <begin position="1"/>
        <end position="236"/>
    </location>
</feature>
<feature type="domain" description="RNase III" evidence="1">
    <location>
        <begin position="13"/>
        <end position="138"/>
    </location>
</feature>
<feature type="domain" description="DRBM" evidence="1">
    <location>
        <begin position="164"/>
        <end position="232"/>
    </location>
</feature>
<feature type="active site" evidence="1">
    <location>
        <position position="55"/>
    </location>
</feature>
<feature type="active site" evidence="1">
    <location>
        <position position="127"/>
    </location>
</feature>
<feature type="binding site" evidence="1">
    <location>
        <position position="51"/>
    </location>
    <ligand>
        <name>Mg(2+)</name>
        <dbReference type="ChEBI" id="CHEBI:18420"/>
    </ligand>
</feature>
<feature type="binding site" evidence="1">
    <location>
        <position position="124"/>
    </location>
    <ligand>
        <name>Mg(2+)</name>
        <dbReference type="ChEBI" id="CHEBI:18420"/>
    </ligand>
</feature>
<feature type="binding site" evidence="1">
    <location>
        <position position="127"/>
    </location>
    <ligand>
        <name>Mg(2+)</name>
        <dbReference type="ChEBI" id="CHEBI:18420"/>
    </ligand>
</feature>
<dbReference type="EC" id="3.1.26.3" evidence="1"/>
<dbReference type="EMBL" id="CP000235">
    <property type="protein sequence ID" value="ABD43297.1"/>
    <property type="molecule type" value="Genomic_DNA"/>
</dbReference>
<dbReference type="SMR" id="Q2GIW0"/>
<dbReference type="STRING" id="212042.APH_1149"/>
<dbReference type="PaxDb" id="212042-APH_1149"/>
<dbReference type="EnsemblBacteria" id="ABD43297">
    <property type="protein sequence ID" value="ABD43297"/>
    <property type="gene ID" value="APH_1149"/>
</dbReference>
<dbReference type="KEGG" id="aph:APH_1149"/>
<dbReference type="eggNOG" id="COG0571">
    <property type="taxonomic scope" value="Bacteria"/>
</dbReference>
<dbReference type="HOGENOM" id="CLU_000907_1_1_5"/>
<dbReference type="Proteomes" id="UP000001943">
    <property type="component" value="Chromosome"/>
</dbReference>
<dbReference type="GO" id="GO:0005737">
    <property type="term" value="C:cytoplasm"/>
    <property type="evidence" value="ECO:0007669"/>
    <property type="project" value="UniProtKB-SubCell"/>
</dbReference>
<dbReference type="GO" id="GO:0003725">
    <property type="term" value="F:double-stranded RNA binding"/>
    <property type="evidence" value="ECO:0007669"/>
    <property type="project" value="TreeGrafter"/>
</dbReference>
<dbReference type="GO" id="GO:0046872">
    <property type="term" value="F:metal ion binding"/>
    <property type="evidence" value="ECO:0007669"/>
    <property type="project" value="UniProtKB-KW"/>
</dbReference>
<dbReference type="GO" id="GO:0004525">
    <property type="term" value="F:ribonuclease III activity"/>
    <property type="evidence" value="ECO:0007669"/>
    <property type="project" value="UniProtKB-UniRule"/>
</dbReference>
<dbReference type="GO" id="GO:0019843">
    <property type="term" value="F:rRNA binding"/>
    <property type="evidence" value="ECO:0007669"/>
    <property type="project" value="UniProtKB-KW"/>
</dbReference>
<dbReference type="GO" id="GO:0006397">
    <property type="term" value="P:mRNA processing"/>
    <property type="evidence" value="ECO:0007669"/>
    <property type="project" value="UniProtKB-UniRule"/>
</dbReference>
<dbReference type="GO" id="GO:0010468">
    <property type="term" value="P:regulation of gene expression"/>
    <property type="evidence" value="ECO:0007669"/>
    <property type="project" value="TreeGrafter"/>
</dbReference>
<dbReference type="GO" id="GO:0006364">
    <property type="term" value="P:rRNA processing"/>
    <property type="evidence" value="ECO:0007669"/>
    <property type="project" value="UniProtKB-UniRule"/>
</dbReference>
<dbReference type="GO" id="GO:0008033">
    <property type="term" value="P:tRNA processing"/>
    <property type="evidence" value="ECO:0007669"/>
    <property type="project" value="UniProtKB-KW"/>
</dbReference>
<dbReference type="CDD" id="cd10845">
    <property type="entry name" value="DSRM_RNAse_III_family"/>
    <property type="match status" value="1"/>
</dbReference>
<dbReference type="CDD" id="cd00593">
    <property type="entry name" value="RIBOc"/>
    <property type="match status" value="1"/>
</dbReference>
<dbReference type="FunFam" id="1.10.1520.10:FF:000001">
    <property type="entry name" value="Ribonuclease 3"/>
    <property type="match status" value="1"/>
</dbReference>
<dbReference type="Gene3D" id="3.30.160.20">
    <property type="match status" value="1"/>
</dbReference>
<dbReference type="Gene3D" id="1.10.1520.10">
    <property type="entry name" value="Ribonuclease III domain"/>
    <property type="match status" value="1"/>
</dbReference>
<dbReference type="HAMAP" id="MF_00104">
    <property type="entry name" value="RNase_III"/>
    <property type="match status" value="1"/>
</dbReference>
<dbReference type="InterPro" id="IPR014720">
    <property type="entry name" value="dsRBD_dom"/>
</dbReference>
<dbReference type="InterPro" id="IPR011907">
    <property type="entry name" value="RNase_III"/>
</dbReference>
<dbReference type="InterPro" id="IPR000999">
    <property type="entry name" value="RNase_III_dom"/>
</dbReference>
<dbReference type="InterPro" id="IPR036389">
    <property type="entry name" value="RNase_III_sf"/>
</dbReference>
<dbReference type="NCBIfam" id="TIGR02191">
    <property type="entry name" value="RNaseIII"/>
    <property type="match status" value="1"/>
</dbReference>
<dbReference type="PANTHER" id="PTHR11207:SF0">
    <property type="entry name" value="RIBONUCLEASE 3"/>
    <property type="match status" value="1"/>
</dbReference>
<dbReference type="PANTHER" id="PTHR11207">
    <property type="entry name" value="RIBONUCLEASE III"/>
    <property type="match status" value="1"/>
</dbReference>
<dbReference type="Pfam" id="PF00035">
    <property type="entry name" value="dsrm"/>
    <property type="match status" value="1"/>
</dbReference>
<dbReference type="Pfam" id="PF14622">
    <property type="entry name" value="Ribonucleas_3_3"/>
    <property type="match status" value="1"/>
</dbReference>
<dbReference type="SMART" id="SM00358">
    <property type="entry name" value="DSRM"/>
    <property type="match status" value="1"/>
</dbReference>
<dbReference type="SMART" id="SM00535">
    <property type="entry name" value="RIBOc"/>
    <property type="match status" value="1"/>
</dbReference>
<dbReference type="SUPFAM" id="SSF54768">
    <property type="entry name" value="dsRNA-binding domain-like"/>
    <property type="match status" value="1"/>
</dbReference>
<dbReference type="SUPFAM" id="SSF69065">
    <property type="entry name" value="RNase III domain-like"/>
    <property type="match status" value="1"/>
</dbReference>
<dbReference type="PROSITE" id="PS50137">
    <property type="entry name" value="DS_RBD"/>
    <property type="match status" value="1"/>
</dbReference>
<dbReference type="PROSITE" id="PS00517">
    <property type="entry name" value="RNASE_3_1"/>
    <property type="match status" value="1"/>
</dbReference>
<dbReference type="PROSITE" id="PS50142">
    <property type="entry name" value="RNASE_3_2"/>
    <property type="match status" value="1"/>
</dbReference>
<keyword id="KW-0963">Cytoplasm</keyword>
<keyword id="KW-0255">Endonuclease</keyword>
<keyword id="KW-0378">Hydrolase</keyword>
<keyword id="KW-0460">Magnesium</keyword>
<keyword id="KW-0479">Metal-binding</keyword>
<keyword id="KW-0507">mRNA processing</keyword>
<keyword id="KW-0540">Nuclease</keyword>
<keyword id="KW-0694">RNA-binding</keyword>
<keyword id="KW-0698">rRNA processing</keyword>
<keyword id="KW-0699">rRNA-binding</keyword>
<keyword id="KW-0819">tRNA processing</keyword>
<name>RNC_ANAPZ</name>
<gene>
    <name evidence="1" type="primary">rnc</name>
    <name type="ordered locus">APH_1149</name>
</gene>
<accession>Q2GIW0</accession>
<organism>
    <name type="scientific">Anaplasma phagocytophilum (strain HZ)</name>
    <dbReference type="NCBI Taxonomy" id="212042"/>
    <lineage>
        <taxon>Bacteria</taxon>
        <taxon>Pseudomonadati</taxon>
        <taxon>Pseudomonadota</taxon>
        <taxon>Alphaproteobacteria</taxon>
        <taxon>Rickettsiales</taxon>
        <taxon>Anaplasmataceae</taxon>
        <taxon>Anaplasma</taxon>
        <taxon>phagocytophilum group</taxon>
    </lineage>
</organism>
<protein>
    <recommendedName>
        <fullName evidence="1">Ribonuclease 3</fullName>
        <ecNumber evidence="1">3.1.26.3</ecNumber>
    </recommendedName>
    <alternativeName>
        <fullName evidence="1">Ribonuclease III</fullName>
        <shortName evidence="1">RNase III</shortName>
    </alternativeName>
</protein>
<comment type="function">
    <text evidence="1">Digests double-stranded RNA. Involved in the processing of primary rRNA transcript to yield the immediate precursors to the large and small rRNAs (23S and 16S). Processes some mRNAs, and tRNAs when they are encoded in the rRNA operon. Processes pre-crRNA and tracrRNA of type II CRISPR loci if present in the organism.</text>
</comment>
<comment type="catalytic activity">
    <reaction evidence="1">
        <text>Endonucleolytic cleavage to 5'-phosphomonoester.</text>
        <dbReference type="EC" id="3.1.26.3"/>
    </reaction>
</comment>
<comment type="cofactor">
    <cofactor evidence="1">
        <name>Mg(2+)</name>
        <dbReference type="ChEBI" id="CHEBI:18420"/>
    </cofactor>
</comment>
<comment type="subunit">
    <text evidence="1">Homodimer.</text>
</comment>
<comment type="subcellular location">
    <subcellularLocation>
        <location evidence="1">Cytoplasm</location>
    </subcellularLocation>
</comment>
<comment type="similarity">
    <text evidence="1">Belongs to the ribonuclease III family.</text>
</comment>
<proteinExistence type="inferred from homology"/>
<evidence type="ECO:0000255" key="1">
    <source>
        <dbReference type="HAMAP-Rule" id="MF_00104"/>
    </source>
</evidence>